<keyword id="KW-1157">Cap snatching</keyword>
<keyword id="KW-1262">Eukaryotic host gene expression shutoff by virus</keyword>
<keyword id="KW-1191">Eukaryotic host transcription shutoff by virus</keyword>
<keyword id="KW-1190">Host gene expression shutoff by virus</keyword>
<keyword id="KW-1048">Host nucleus</keyword>
<keyword id="KW-0945">Host-virus interaction</keyword>
<keyword id="KW-1104">Inhibition of host RNA polymerase II by virus</keyword>
<keyword id="KW-0506">mRNA capping</keyword>
<keyword id="KW-0507">mRNA processing</keyword>
<keyword id="KW-1195">Viral transcription</keyword>
<keyword id="KW-0946">Virion</keyword>
<feature type="chain" id="PRO_0000078848" description="Polymerase basic protein 2">
    <location>
        <begin position="1"/>
        <end position="774"/>
    </location>
</feature>
<sequence length="774" mass="87825">MSLLLTIAKEYKRLCQDAKAAQMMTVGTVSNYTTFKKWTTSRKEKNPSLRMRWAMSSKFPIIANKRMLEEAQIPKEHNNVALWEDTEDVSKRDHVLASTSCINYWNFCGPCANNSEVIKEVYKSRFGRLERRKEIMWKELRFTLVDRQRRRVDTQPVEQRLRTGEIKDLQMWTLFEDEAPLASKFILDNYGLVKEMRSKFANKPLNKEVVAHMLEKQFNPESRFLPVFGAIRPERMELIHALGGETWIQEANTAGISNVDQRKNDMRAVCRKVCLAANASIMNAKSKLVEYIKSTSMRIGETERKLEELILETDDVSPEVTLCKSALGGPLGKTLSFGPMLLKKISGSGVKVKDTVYIQGVRAVQFEYWSEQEEFYGEYKSATALFSRKERSLEWITIGGGINEDRKRLLAMCMIFCRDGDYFKDAPATITMADLSTKLGREIPYQYVMMNWIQKSEDNLEALLYSRGIVETNPGKMGSSMGIDGSKRAIKSLRAVTIQSGKIDMPESKEKIHLELSDNLEAFDSSGRIVATILDLPSDKKVTFQDVSFQHPDLAVLRDEKTAITKGYEALIKRLGTGDNDIPSLIAKKDYLSLYNLPEVKLMAPLIRPNRKGVYSRVARKLVSTQVTTGHYSLHELIKVLPFTYFAPKQGMFEGRLFFSNDSFVEPGVNNNVFSWSKADSSKIYCHGIAIRVPLVVGDEHMDTSLALLEGFSVCENDPRAPMVTRQDLIDVGFGQKVRLFIGQGSVRTFKRTASQRAASSDVNKNVKKIKMSN</sequence>
<dbReference type="EMBL" id="M28061">
    <property type="protein sequence ID" value="AAA43815.1"/>
    <property type="molecule type" value="Genomic_RNA"/>
</dbReference>
<dbReference type="PIR" id="A34225">
    <property type="entry name" value="P3IV50"/>
</dbReference>
<dbReference type="SMR" id="P13877"/>
<dbReference type="GO" id="GO:0042025">
    <property type="term" value="C:host cell nucleus"/>
    <property type="evidence" value="ECO:0007669"/>
    <property type="project" value="UniProtKB-SubCell"/>
</dbReference>
<dbReference type="GO" id="GO:0044423">
    <property type="term" value="C:virion component"/>
    <property type="evidence" value="ECO:0007669"/>
    <property type="project" value="UniProtKB-UniRule"/>
</dbReference>
<dbReference type="GO" id="GO:0003723">
    <property type="term" value="F:RNA binding"/>
    <property type="evidence" value="ECO:0007669"/>
    <property type="project" value="UniProtKB-UniRule"/>
</dbReference>
<dbReference type="GO" id="GO:0003968">
    <property type="term" value="F:RNA-directed RNA polymerase activity"/>
    <property type="evidence" value="ECO:0007669"/>
    <property type="project" value="UniProtKB-UniRule"/>
</dbReference>
<dbReference type="GO" id="GO:0006370">
    <property type="term" value="P:7-methylguanosine mRNA capping"/>
    <property type="evidence" value="ECO:0007669"/>
    <property type="project" value="UniProtKB-UniRule"/>
</dbReference>
<dbReference type="GO" id="GO:0075526">
    <property type="term" value="P:cap snatching"/>
    <property type="evidence" value="ECO:0007669"/>
    <property type="project" value="UniProtKB-UniRule"/>
</dbReference>
<dbReference type="GO" id="GO:0006351">
    <property type="term" value="P:DNA-templated transcription"/>
    <property type="evidence" value="ECO:0007669"/>
    <property type="project" value="UniProtKB-UniRule"/>
</dbReference>
<dbReference type="GO" id="GO:0039657">
    <property type="term" value="P:symbiont-mediated suppression of host gene expression"/>
    <property type="evidence" value="ECO:0007669"/>
    <property type="project" value="UniProtKB-KW"/>
</dbReference>
<dbReference type="GO" id="GO:0039523">
    <property type="term" value="P:symbiont-mediated suppression of host mRNA transcription via inhibition of RNA polymerase II activity"/>
    <property type="evidence" value="ECO:0007669"/>
    <property type="project" value="UniProtKB-UniRule"/>
</dbReference>
<dbReference type="GO" id="GO:0039694">
    <property type="term" value="P:viral RNA genome replication"/>
    <property type="evidence" value="ECO:0007669"/>
    <property type="project" value="InterPro"/>
</dbReference>
<dbReference type="HAMAP" id="MF_04062">
    <property type="entry name" value="INV_PB2"/>
    <property type="match status" value="1"/>
</dbReference>
<dbReference type="InterPro" id="IPR049110">
    <property type="entry name" value="Flu_PB2_2nd"/>
</dbReference>
<dbReference type="InterPro" id="IPR049114">
    <property type="entry name" value="Flu_PB2_6th"/>
</dbReference>
<dbReference type="InterPro" id="IPR049115">
    <property type="entry name" value="Flu_PB2_C"/>
</dbReference>
<dbReference type="InterPro" id="IPR048298">
    <property type="entry name" value="Flu_PB2_CAP-bd"/>
</dbReference>
<dbReference type="InterPro" id="IPR049111">
    <property type="entry name" value="Flu_PB2_middle"/>
</dbReference>
<dbReference type="InterPro" id="IPR049106">
    <property type="entry name" value="Flu_PB2_N"/>
</dbReference>
<dbReference type="InterPro" id="IPR001591">
    <property type="entry name" value="INV_PB2"/>
</dbReference>
<dbReference type="InterPro" id="IPR049113">
    <property type="entry name" value="PB2_helical"/>
</dbReference>
<dbReference type="Pfam" id="PF20947">
    <property type="entry name" value="Flu_PB2_1st"/>
    <property type="match status" value="1"/>
</dbReference>
<dbReference type="Pfam" id="PF20948">
    <property type="entry name" value="Flu_PB2_2nd"/>
    <property type="match status" value="1"/>
</dbReference>
<dbReference type="Pfam" id="PF20949">
    <property type="entry name" value="Flu_PB2_3rd"/>
    <property type="match status" value="1"/>
</dbReference>
<dbReference type="Pfam" id="PF20950">
    <property type="entry name" value="Flu_PB2_4th"/>
    <property type="match status" value="1"/>
</dbReference>
<dbReference type="Pfam" id="PF00604">
    <property type="entry name" value="Flu_PB2_5th"/>
    <property type="match status" value="1"/>
</dbReference>
<dbReference type="Pfam" id="PF20951">
    <property type="entry name" value="Flu_PB2_6th"/>
    <property type="match status" value="1"/>
</dbReference>
<dbReference type="Pfam" id="PF20952">
    <property type="entry name" value="Flu_PB2_7th"/>
    <property type="match status" value="1"/>
</dbReference>
<name>PB2_INCJJ</name>
<reference key="1">
    <citation type="journal article" date="1989" name="Virology">
        <title>Comparison of the three large polymerase proteins of influenza A, B, and C viruses.</title>
        <authorList>
            <person name="Yamashita M."/>
            <person name="Krystal M."/>
            <person name="Palese P."/>
        </authorList>
    </citation>
    <scope>NUCLEOTIDE SEQUENCE [GENOMIC RNA]</scope>
</reference>
<comment type="function">
    <text evidence="1">Plays an essential role in transcription initiation and cap-stealing mechanism, in which cellular capped pre-mRNAs are used to generate primers for viral transcription. Recognizes and binds a wide range of cap structures of target pre-RNAs which are subsequently cleaved after 10-13 nucleotides by the viral protein PA. Plays a role in the initiation of the viral genome replication and modulates the activity of the ribonucleoprotein (RNP) complex.</text>
</comment>
<comment type="subunit">
    <text evidence="1">Influenza RNA polymerase is composed of three subunits: PB1, PB2 and PA. Interacts (via N-terminus) with PB1 (via C-terminus). Interacts with nucleoprotein NP (via N-terminus).</text>
</comment>
<comment type="subcellular location">
    <subcellularLocation>
        <location evidence="1">Virion</location>
    </subcellularLocation>
    <subcellularLocation>
        <location evidence="1">Host nucleus</location>
    </subcellularLocation>
</comment>
<comment type="similarity">
    <text evidence="1">Belongs to the influenza viruses PB2 family.</text>
</comment>
<gene>
    <name evidence="1" type="primary">PB2</name>
</gene>
<protein>
    <recommendedName>
        <fullName evidence="1">Polymerase basic protein 2</fullName>
    </recommendedName>
    <alternativeName>
        <fullName evidence="1">RNA-directed RNA polymerase subunit P3</fullName>
    </alternativeName>
</protein>
<accession>P13877</accession>
<organismHost>
    <name type="scientific">Homo sapiens</name>
    <name type="common">Human</name>
    <dbReference type="NCBI Taxonomy" id="9606"/>
</organismHost>
<organismHost>
    <name type="scientific">Sus scrofa</name>
    <name type="common">Pig</name>
    <dbReference type="NCBI Taxonomy" id="9823"/>
</organismHost>
<organism>
    <name type="scientific">Influenza C virus (strain C/JJ/1950)</name>
    <dbReference type="NCBI Taxonomy" id="11560"/>
    <lineage>
        <taxon>Viruses</taxon>
        <taxon>Riboviria</taxon>
        <taxon>Orthornavirae</taxon>
        <taxon>Negarnaviricota</taxon>
        <taxon>Polyploviricotina</taxon>
        <taxon>Insthoviricetes</taxon>
        <taxon>Articulavirales</taxon>
        <taxon>Orthomyxoviridae</taxon>
        <taxon>Gammainfluenzavirus</taxon>
        <taxon>Gammainfluenzavirus influenzae</taxon>
        <taxon>Influenza C virus</taxon>
    </lineage>
</organism>
<evidence type="ECO:0000255" key="1">
    <source>
        <dbReference type="HAMAP-Rule" id="MF_04062"/>
    </source>
</evidence>
<proteinExistence type="inferred from homology"/>